<gene>
    <name evidence="6" type="primary">LSM4</name>
    <name evidence="8" type="synonym">EMB1644</name>
    <name evidence="9" type="ordered locus">At5g27720</name>
</gene>
<sequence length="129" mass="14323">MLPLSLLKTAQGHPMLVELKNGETYNGHLVNCDTWMNIHLREVICTSKDGDRFWRMPECYIRGNTIKYLRVPDEVIDKVQEEKTRTDRKPPGVGRGRGRGVDDGGARGRGRGTSMGKMGGNRGAGRGRG</sequence>
<name>LSM4_ARATH</name>
<organism>
    <name type="scientific">Arabidopsis thaliana</name>
    <name type="common">Mouse-ear cress</name>
    <dbReference type="NCBI Taxonomy" id="3702"/>
    <lineage>
        <taxon>Eukaryota</taxon>
        <taxon>Viridiplantae</taxon>
        <taxon>Streptophyta</taxon>
        <taxon>Embryophyta</taxon>
        <taxon>Tracheophyta</taxon>
        <taxon>Spermatophyta</taxon>
        <taxon>Magnoliopsida</taxon>
        <taxon>eudicotyledons</taxon>
        <taxon>Gunneridae</taxon>
        <taxon>Pentapetalae</taxon>
        <taxon>rosids</taxon>
        <taxon>malvids</taxon>
        <taxon>Brassicales</taxon>
        <taxon>Brassicaceae</taxon>
        <taxon>Camelineae</taxon>
        <taxon>Arabidopsis</taxon>
    </lineage>
</organism>
<comment type="function">
    <text evidence="4 5">Component of LSM protein complexes, which are involved in RNA processing. Component of the cytoplasmic LSM1-LSM7 complex which is involved in mRNA degradation by promoting decapping and leading to accurate 5'-3' mRNA decay. The cytoplasmic LSM1-LSM7 complex regulates developmental gene expression by the decapping of specific development-related transcripts. Component of the nuclear LSM2-LSM8 complex which is involved splicing nuclear mRNAs. LSM2-LSM8 binds directly to the U6 small nuclear RNAs (snRNAs) and is essential for accurate splicing of selected development-related mRNAs through the stabilization of the spliceosomal U6 snRNA. Plays a critical role in the regulation of development-related gene expression.</text>
</comment>
<comment type="subunit">
    <text evidence="4 5">Component of the heptameric LSM1-LSM7 complex that forms a seven-membered ring structure with a donut shape. The LSM subunits are arranged in the order LSM1, LSM2, LSM3, LSM6, LSM5, LSM7 and LSM4 (PubMed:23221597, PubMed:23620288). LSM4 subunit interacts only with its two neighboring subunits, LSM1A or LSM1B and LSM7 (PubMed:23221597). Component of the heptameric LSM2-LSM8 complex that forms a seven-membered ring structure with a donut shape. The LSM subunits are arranged in the order LSM8, LSM2, LSM3, LSM6, LSM5, LSM7 and LSM4 (PubMed:23221597, PubMed:23620288). LSM4 subunit interacts only with its two neighboring subunits, LSM8 and LSM7 (PubMed:23221597).</text>
</comment>
<comment type="interaction">
    <interactant intactId="EBI-16419411">
        <id>F4K4E3</id>
    </interactant>
    <interactant intactId="EBI-25506855">
        <id>O23160</id>
        <label>MYB73</label>
    </interactant>
    <organismsDiffer>false</organismsDiffer>
    <experiments>3</experiments>
</comment>
<comment type="subcellular location">
    <subcellularLocation>
        <location evidence="4">Cytoplasm</location>
    </subcellularLocation>
    <subcellularLocation>
        <location evidence="4">Nucleus</location>
    </subcellularLocation>
</comment>
<comment type="tissue specificity">
    <text evidence="4 5">Expressed in roots, leaves, stems, flowers and siliques.</text>
</comment>
<comment type="PTM">
    <text evidence="3">Methylated by PMRT15/SKB1 in response to salt stress or abscisic acid (ABA) treatment.</text>
</comment>
<comment type="disruption phenotype">
    <text evidence="3">Severe developmental retardation leading to plant death.</text>
</comment>
<comment type="similarity">
    <text evidence="8">Belongs to the snRNP Sm proteins family.</text>
</comment>
<evidence type="ECO:0000255" key="1">
    <source>
        <dbReference type="PROSITE-ProRule" id="PRU01346"/>
    </source>
</evidence>
<evidence type="ECO:0000256" key="2">
    <source>
        <dbReference type="SAM" id="MobiDB-lite"/>
    </source>
</evidence>
<evidence type="ECO:0000269" key="3">
    <source>
    </source>
</evidence>
<evidence type="ECO:0000269" key="4">
    <source>
    </source>
</evidence>
<evidence type="ECO:0000269" key="5">
    <source>
    </source>
</evidence>
<evidence type="ECO:0000303" key="6">
    <source>
    </source>
</evidence>
<evidence type="ECO:0000303" key="7">
    <source>
    </source>
</evidence>
<evidence type="ECO:0000305" key="8"/>
<evidence type="ECO:0000312" key="9">
    <source>
        <dbReference type="Araport" id="AT5G27720"/>
    </source>
</evidence>
<keyword id="KW-0963">Cytoplasm</keyword>
<keyword id="KW-0507">mRNA processing</keyword>
<keyword id="KW-0508">mRNA splicing</keyword>
<keyword id="KW-0539">Nucleus</keyword>
<keyword id="KW-1185">Reference proteome</keyword>
<keyword id="KW-0687">Ribonucleoprotein</keyword>
<keyword id="KW-0694">RNA-binding</keyword>
<keyword id="KW-0747">Spliceosome</keyword>
<feature type="chain" id="PRO_0000431646" description="Sm-like protein LSM4">
    <location>
        <begin position="1"/>
        <end position="129"/>
    </location>
</feature>
<feature type="domain" description="Sm" evidence="1">
    <location>
        <begin position="2"/>
        <end position="75"/>
    </location>
</feature>
<feature type="region of interest" description="Disordered" evidence="2">
    <location>
        <begin position="79"/>
        <end position="129"/>
    </location>
</feature>
<feature type="compositionally biased region" description="Basic and acidic residues" evidence="2">
    <location>
        <begin position="79"/>
        <end position="90"/>
    </location>
</feature>
<feature type="compositionally biased region" description="Gly residues" evidence="2">
    <location>
        <begin position="111"/>
        <end position="129"/>
    </location>
</feature>
<feature type="sequence conflict" description="In Ref. 3; AAM13039/AAM91342." evidence="8" ref="3">
    <original>L</original>
    <variation>F</variation>
    <location>
        <position position="7"/>
    </location>
</feature>
<feature type="sequence conflict" description="In Ref. 4; AAM65462." evidence="8" ref="4">
    <original>V</original>
    <variation>L</variation>
    <location>
        <position position="101"/>
    </location>
</feature>
<reference key="1">
    <citation type="journal article" date="2000" name="Nature">
        <title>Sequence and analysis of chromosome 5 of the plant Arabidopsis thaliana.</title>
        <authorList>
            <person name="Tabata S."/>
            <person name="Kaneko T."/>
            <person name="Nakamura Y."/>
            <person name="Kotani H."/>
            <person name="Kato T."/>
            <person name="Asamizu E."/>
            <person name="Miyajima N."/>
            <person name="Sasamoto S."/>
            <person name="Kimura T."/>
            <person name="Hosouchi T."/>
            <person name="Kawashima K."/>
            <person name="Kohara M."/>
            <person name="Matsumoto M."/>
            <person name="Matsuno A."/>
            <person name="Muraki A."/>
            <person name="Nakayama S."/>
            <person name="Nakazaki N."/>
            <person name="Naruo K."/>
            <person name="Okumura S."/>
            <person name="Shinpo S."/>
            <person name="Takeuchi C."/>
            <person name="Wada T."/>
            <person name="Watanabe A."/>
            <person name="Yamada M."/>
            <person name="Yasuda M."/>
            <person name="Sato S."/>
            <person name="de la Bastide M."/>
            <person name="Huang E."/>
            <person name="Spiegel L."/>
            <person name="Gnoj L."/>
            <person name="O'Shaughnessy A."/>
            <person name="Preston R."/>
            <person name="Habermann K."/>
            <person name="Murray J."/>
            <person name="Johnson D."/>
            <person name="Rohlfing T."/>
            <person name="Nelson J."/>
            <person name="Stoneking T."/>
            <person name="Pepin K."/>
            <person name="Spieth J."/>
            <person name="Sekhon M."/>
            <person name="Armstrong J."/>
            <person name="Becker M."/>
            <person name="Belter E."/>
            <person name="Cordum H."/>
            <person name="Cordes M."/>
            <person name="Courtney L."/>
            <person name="Courtney W."/>
            <person name="Dante M."/>
            <person name="Du H."/>
            <person name="Edwards J."/>
            <person name="Fryman J."/>
            <person name="Haakensen B."/>
            <person name="Lamar E."/>
            <person name="Latreille P."/>
            <person name="Leonard S."/>
            <person name="Meyer R."/>
            <person name="Mulvaney E."/>
            <person name="Ozersky P."/>
            <person name="Riley A."/>
            <person name="Strowmatt C."/>
            <person name="Wagner-McPherson C."/>
            <person name="Wollam A."/>
            <person name="Yoakum M."/>
            <person name="Bell M."/>
            <person name="Dedhia N."/>
            <person name="Parnell L."/>
            <person name="Shah R."/>
            <person name="Rodriguez M."/>
            <person name="Hoon See L."/>
            <person name="Vil D."/>
            <person name="Baker J."/>
            <person name="Kirchoff K."/>
            <person name="Toth K."/>
            <person name="King L."/>
            <person name="Bahret A."/>
            <person name="Miller B."/>
            <person name="Marra M.A."/>
            <person name="Martienssen R."/>
            <person name="McCombie W.R."/>
            <person name="Wilson R.K."/>
            <person name="Murphy G."/>
            <person name="Bancroft I."/>
            <person name="Volckaert G."/>
            <person name="Wambutt R."/>
            <person name="Duesterhoeft A."/>
            <person name="Stiekema W."/>
            <person name="Pohl T."/>
            <person name="Entian K.-D."/>
            <person name="Terryn N."/>
            <person name="Hartley N."/>
            <person name="Bent E."/>
            <person name="Johnson S."/>
            <person name="Langham S.-A."/>
            <person name="McCullagh B."/>
            <person name="Robben J."/>
            <person name="Grymonprez B."/>
            <person name="Zimmermann W."/>
            <person name="Ramsperger U."/>
            <person name="Wedler H."/>
            <person name="Balke K."/>
            <person name="Wedler E."/>
            <person name="Peters S."/>
            <person name="van Staveren M."/>
            <person name="Dirkse W."/>
            <person name="Mooijman P."/>
            <person name="Klein Lankhorst R."/>
            <person name="Weitzenegger T."/>
            <person name="Bothe G."/>
            <person name="Rose M."/>
            <person name="Hauf J."/>
            <person name="Berneiser S."/>
            <person name="Hempel S."/>
            <person name="Feldpausch M."/>
            <person name="Lamberth S."/>
            <person name="Villarroel R."/>
            <person name="Gielen J."/>
            <person name="Ardiles W."/>
            <person name="Bents O."/>
            <person name="Lemcke K."/>
            <person name="Kolesov G."/>
            <person name="Mayer K.F.X."/>
            <person name="Rudd S."/>
            <person name="Schoof H."/>
            <person name="Schueller C."/>
            <person name="Zaccaria P."/>
            <person name="Mewes H.-W."/>
            <person name="Bevan M."/>
            <person name="Fransz P.F."/>
        </authorList>
    </citation>
    <scope>NUCLEOTIDE SEQUENCE [LARGE SCALE GENOMIC DNA]</scope>
    <source>
        <strain>cv. Columbia</strain>
    </source>
</reference>
<reference key="2">
    <citation type="journal article" date="2017" name="Plant J.">
        <title>Araport11: a complete reannotation of the Arabidopsis thaliana reference genome.</title>
        <authorList>
            <person name="Cheng C.Y."/>
            <person name="Krishnakumar V."/>
            <person name="Chan A.P."/>
            <person name="Thibaud-Nissen F."/>
            <person name="Schobel S."/>
            <person name="Town C.D."/>
        </authorList>
    </citation>
    <scope>GENOME REANNOTATION</scope>
    <source>
        <strain>cv. Columbia</strain>
    </source>
</reference>
<reference key="3">
    <citation type="journal article" date="2003" name="Science">
        <title>Empirical analysis of transcriptional activity in the Arabidopsis genome.</title>
        <authorList>
            <person name="Yamada K."/>
            <person name="Lim J."/>
            <person name="Dale J.M."/>
            <person name="Chen H."/>
            <person name="Shinn P."/>
            <person name="Palm C.J."/>
            <person name="Southwick A.M."/>
            <person name="Wu H.C."/>
            <person name="Kim C.J."/>
            <person name="Nguyen M."/>
            <person name="Pham P.K."/>
            <person name="Cheuk R.F."/>
            <person name="Karlin-Newmann G."/>
            <person name="Liu S.X."/>
            <person name="Lam B."/>
            <person name="Sakano H."/>
            <person name="Wu T."/>
            <person name="Yu G."/>
            <person name="Miranda M."/>
            <person name="Quach H.L."/>
            <person name="Tripp M."/>
            <person name="Chang C.H."/>
            <person name="Lee J.M."/>
            <person name="Toriumi M.J."/>
            <person name="Chan M.M."/>
            <person name="Tang C.C."/>
            <person name="Onodera C.S."/>
            <person name="Deng J.M."/>
            <person name="Akiyama K."/>
            <person name="Ansari Y."/>
            <person name="Arakawa T."/>
            <person name="Banh J."/>
            <person name="Banno F."/>
            <person name="Bowser L."/>
            <person name="Brooks S.Y."/>
            <person name="Carninci P."/>
            <person name="Chao Q."/>
            <person name="Choy N."/>
            <person name="Enju A."/>
            <person name="Goldsmith A.D."/>
            <person name="Gurjal M."/>
            <person name="Hansen N.F."/>
            <person name="Hayashizaki Y."/>
            <person name="Johnson-Hopson C."/>
            <person name="Hsuan V.W."/>
            <person name="Iida K."/>
            <person name="Karnes M."/>
            <person name="Khan S."/>
            <person name="Koesema E."/>
            <person name="Ishida J."/>
            <person name="Jiang P.X."/>
            <person name="Jones T."/>
            <person name="Kawai J."/>
            <person name="Kamiya A."/>
            <person name="Meyers C."/>
            <person name="Nakajima M."/>
            <person name="Narusaka M."/>
            <person name="Seki M."/>
            <person name="Sakurai T."/>
            <person name="Satou M."/>
            <person name="Tamse R."/>
            <person name="Vaysberg M."/>
            <person name="Wallender E.K."/>
            <person name="Wong C."/>
            <person name="Yamamura Y."/>
            <person name="Yuan S."/>
            <person name="Shinozaki K."/>
            <person name="Davis R.W."/>
            <person name="Theologis A."/>
            <person name="Ecker J.R."/>
        </authorList>
    </citation>
    <scope>NUCLEOTIDE SEQUENCE [LARGE SCALE MRNA]</scope>
    <source>
        <strain>cv. Columbia</strain>
    </source>
</reference>
<reference key="4">
    <citation type="submission" date="2002-03" db="EMBL/GenBank/DDBJ databases">
        <title>Full-length cDNA from Arabidopsis thaliana.</title>
        <authorList>
            <person name="Brover V.V."/>
            <person name="Troukhan M.E."/>
            <person name="Alexandrov N.A."/>
            <person name="Lu Y.-P."/>
            <person name="Flavell R.B."/>
            <person name="Feldmann K.A."/>
        </authorList>
    </citation>
    <scope>NUCLEOTIDE SEQUENCE [LARGE SCALE MRNA]</scope>
</reference>
<reference key="5">
    <citation type="journal article" date="2011" name="Plant Cell">
        <title>Arabidopsis floral initiator SKB1 confers high salt tolerance by regulating transcription and pre-mRNA splicing through altering histone H4R3 and small nuclear ribonucleoprotein LSM4 methylation.</title>
        <authorList>
            <person name="Zhang Z."/>
            <person name="Zhang S."/>
            <person name="Zhang Y."/>
            <person name="Wang X."/>
            <person name="Li D."/>
            <person name="Li Q."/>
            <person name="Yue M."/>
            <person name="Li Q."/>
            <person name="Zhang Y.E."/>
            <person name="Xu Y."/>
            <person name="Xue Y."/>
            <person name="Chong K."/>
            <person name="Bao S."/>
        </authorList>
    </citation>
    <scope>METHYLATION BY PMRT15/SKB1</scope>
    <scope>DISRUPTION PHENOTYPE</scope>
</reference>
<reference key="6">
    <citation type="journal article" date="2012" name="Plant Cell">
        <title>LSM proteins provide accurate splicing and decay of selected transcripts to ensure normal Arabidopsis development.</title>
        <authorList>
            <person name="Perea-Resa C."/>
            <person name="Hernandez-Verdeja T."/>
            <person name="Lopez-Cobollo R."/>
            <person name="del Mar Castellano M."/>
            <person name="Salinas J."/>
        </authorList>
    </citation>
    <scope>FUNCTION</scope>
    <scope>SUBUNIT</scope>
    <scope>INTERACTION WITH LSM1A; LSM7 AND LSM8</scope>
    <scope>SUBCELLULAR LOCATION</scope>
    <scope>TISSUE SPECIFICITY</scope>
    <scope>GENE FAMILY</scope>
</reference>
<reference key="7">
    <citation type="journal article" date="2013" name="Nucleic Acids Res.">
        <title>Arabidopsis thaliana LSM proteins function in mRNA splicing and degradation.</title>
        <authorList>
            <person name="Golisz A."/>
            <person name="Sikorski P.J."/>
            <person name="Kruszka K."/>
            <person name="Kufel J."/>
        </authorList>
    </citation>
    <scope>IDENTIFICATION BY MASS SPECTROMETRY</scope>
    <scope>FUNCTION</scope>
    <scope>SUBUNIT</scope>
    <scope>TISSUE SPECIFICITY</scope>
</reference>
<protein>
    <recommendedName>
        <fullName evidence="8">Sm-like protein LSM4</fullName>
        <shortName evidence="7">AtLSM4</shortName>
    </recommendedName>
    <alternativeName>
        <fullName evidence="8">Protein EMBRYO DEFECTIVE 1644</fullName>
    </alternativeName>
    <alternativeName>
        <fullName evidence="8">U6 snRNA-associated Sm-like protein LSM4</fullName>
    </alternativeName>
</protein>
<proteinExistence type="evidence at protein level"/>
<dbReference type="EMBL" id="AC069556">
    <property type="status" value="NOT_ANNOTATED_CDS"/>
    <property type="molecule type" value="Genomic_DNA"/>
</dbReference>
<dbReference type="EMBL" id="CP002688">
    <property type="protein sequence ID" value="AED93718.1"/>
    <property type="molecule type" value="Genomic_DNA"/>
</dbReference>
<dbReference type="EMBL" id="AY093040">
    <property type="protein sequence ID" value="AAM13039.1"/>
    <property type="molecule type" value="mRNA"/>
</dbReference>
<dbReference type="EMBL" id="AY128942">
    <property type="protein sequence ID" value="AAM91342.1"/>
    <property type="molecule type" value="mRNA"/>
</dbReference>
<dbReference type="EMBL" id="AY087911">
    <property type="protein sequence ID" value="AAM65462.1"/>
    <property type="molecule type" value="mRNA"/>
</dbReference>
<dbReference type="RefSeq" id="NP_198124.1">
    <property type="nucleotide sequence ID" value="NM_122654.4"/>
</dbReference>
<dbReference type="SMR" id="F4K4E3"/>
<dbReference type="ComplexPortal" id="CPX-1308">
    <property type="entry name" value="LSM1-7-PAT1 complex, variant LSM1A-LSM3A-LSM6A-PAT1"/>
</dbReference>
<dbReference type="ComplexPortal" id="CPX-1309">
    <property type="entry name" value="LSM2-8 complex, variant LSM3A-LSM6A"/>
</dbReference>
<dbReference type="ComplexPortal" id="CPX-1345">
    <property type="entry name" value="LSM1-7-PAT1 complex, variant LSM1A-LSM3B-LSM6B-PAT1"/>
</dbReference>
<dbReference type="ComplexPortal" id="CPX-1346">
    <property type="entry name" value="LSM1-7-PAT1 complex, variant LSM1A-LSM3B-LSM6A-PAT1"/>
</dbReference>
<dbReference type="ComplexPortal" id="CPX-1347">
    <property type="entry name" value="LSM1-7-PAT1 complex, variant LSM1B-LSM3A-LSM6A-PAT1"/>
</dbReference>
<dbReference type="ComplexPortal" id="CPX-1348">
    <property type="entry name" value="LSM1-7-PAT1 complex, variant LSM1B-LSM3B-LSM6A-PAT1"/>
</dbReference>
<dbReference type="ComplexPortal" id="CPX-1349">
    <property type="entry name" value="LSM1-7-PAT1 complex, variant LSM1B-LSM3B-LSM6B-PAT1"/>
</dbReference>
<dbReference type="ComplexPortal" id="CPX-1350">
    <property type="entry name" value="LSM1-7-PAT1 complex, variant LSM1B-LSM3A-LSM6B-PAT1"/>
</dbReference>
<dbReference type="ComplexPortal" id="CPX-1351">
    <property type="entry name" value="LSM1-7-PAT1 complex, variant LSM1A-LSM3A-LSM6B-PAT1"/>
</dbReference>
<dbReference type="ComplexPortal" id="CPX-1352">
    <property type="entry name" value="LSM2-8 complex, variant LSM3A-LSM6B"/>
</dbReference>
<dbReference type="ComplexPortal" id="CPX-1353">
    <property type="entry name" value="LSM2-8 complex, variant LSM3B-LSM6A"/>
</dbReference>
<dbReference type="ComplexPortal" id="CPX-1354">
    <property type="entry name" value="LSM2-8 complex, variant LSM3B-LSM6B"/>
</dbReference>
<dbReference type="ComplexPortal" id="CPX-1391">
    <property type="entry name" value="LSM1-7-PAT1 complex, variant LSM1A-LSM3A-LSM6A-PAT1H1"/>
</dbReference>
<dbReference type="ComplexPortal" id="CPX-1392">
    <property type="entry name" value="LSM1-7-PAT1 complex, variant LSM1A-LSM3A-LSM6B-PAT1H1"/>
</dbReference>
<dbReference type="ComplexPortal" id="CPX-1393">
    <property type="entry name" value="LSM1-7-PAT1 complex, variant LSM1A-LSM3B-LSM6A-PAT1H1"/>
</dbReference>
<dbReference type="ComplexPortal" id="CPX-1394">
    <property type="entry name" value="LSM1-7-PAT1 complex, variant LSM1A-LSM3B-LSM6B-PAT1H1"/>
</dbReference>
<dbReference type="ComplexPortal" id="CPX-1395">
    <property type="entry name" value="LSM1-7-PAT1 complex, variant LSM1B-LSM3A-LSM6A-PAT1H1"/>
</dbReference>
<dbReference type="ComplexPortal" id="CPX-1396">
    <property type="entry name" value="LSM1-7-PAT1 complex, variant LSM1B-LSM3A-LSM6B-PAT1H1"/>
</dbReference>
<dbReference type="ComplexPortal" id="CPX-1397">
    <property type="entry name" value="LSM1-7-PAT1 complex, variant LSM1B-LSM3B-LSM6A-PAT1H1"/>
</dbReference>
<dbReference type="ComplexPortal" id="CPX-1398">
    <property type="entry name" value="LSM1-7-PAT1 complex, variant LSM1B-LSM3B-LSM6B-PAT1H1"/>
</dbReference>
<dbReference type="ComplexPortal" id="CPX-1399">
    <property type="entry name" value="LSM1-7-PAT1 complex, variant LSM1A-LSM3A-LSM6A-PAT1H2"/>
</dbReference>
<dbReference type="ComplexPortal" id="CPX-1400">
    <property type="entry name" value="LSM1-7-PAT1 complex, variant LSM1A-LSM3A-LSM6B-PAT1H2"/>
</dbReference>
<dbReference type="ComplexPortal" id="CPX-1401">
    <property type="entry name" value="LSM1-7-PAT1 complex, variant LSM1A-LSM3B-LSM6A-PAT1H2"/>
</dbReference>
<dbReference type="ComplexPortal" id="CPX-1402">
    <property type="entry name" value="LSM1-7-PAT1 complex, variant LSM1A-LSM3B-LSM6B-PAT1H2"/>
</dbReference>
<dbReference type="ComplexPortal" id="CPX-1403">
    <property type="entry name" value="LSM1-7-PAT1 complex, variant LSM1B-LSM3A-LSM6A-PAT1H2"/>
</dbReference>
<dbReference type="ComplexPortal" id="CPX-1404">
    <property type="entry name" value="LSM1-7-PAT1 complex, variant LSM1B-LSM3A-LSM6B-PAT1H2"/>
</dbReference>
<dbReference type="ComplexPortal" id="CPX-1405">
    <property type="entry name" value="LSM1-7-PAT1 complex, variant LSM1B-LSM3B-LSM6A-PAT1H2"/>
</dbReference>
<dbReference type="ComplexPortal" id="CPX-1406">
    <property type="entry name" value="LSM1-7-PAT1 complex, variant LSM1B-LSM3B-LSM6B-PAT1H2"/>
</dbReference>
<dbReference type="FunCoup" id="F4K4E3">
    <property type="interactions" value="3323"/>
</dbReference>
<dbReference type="IntAct" id="F4K4E3">
    <property type="interactions" value="1"/>
</dbReference>
<dbReference type="STRING" id="3702.F4K4E3"/>
<dbReference type="iPTMnet" id="F4K4E3"/>
<dbReference type="PaxDb" id="3702-AT5G27720.1"/>
<dbReference type="ProteomicsDB" id="238574"/>
<dbReference type="EnsemblPlants" id="AT5G27720.1">
    <property type="protein sequence ID" value="AT5G27720.1"/>
    <property type="gene ID" value="AT5G27720"/>
</dbReference>
<dbReference type="GeneID" id="832834"/>
<dbReference type="Gramene" id="AT5G27720.1">
    <property type="protein sequence ID" value="AT5G27720.1"/>
    <property type="gene ID" value="AT5G27720"/>
</dbReference>
<dbReference type="KEGG" id="ath:AT5G27720"/>
<dbReference type="Araport" id="AT5G27720"/>
<dbReference type="TAIR" id="AT5G27720">
    <property type="gene designation" value="EMB1644"/>
</dbReference>
<dbReference type="eggNOG" id="KOG3293">
    <property type="taxonomic scope" value="Eukaryota"/>
</dbReference>
<dbReference type="HOGENOM" id="CLU_099537_2_1_1"/>
<dbReference type="InParanoid" id="F4K4E3"/>
<dbReference type="OMA" id="VACDAWM"/>
<dbReference type="OrthoDB" id="747253at2759"/>
<dbReference type="PRO" id="PR:F4K4E3"/>
<dbReference type="Proteomes" id="UP000006548">
    <property type="component" value="Chromosome 5"/>
</dbReference>
<dbReference type="ExpressionAtlas" id="F4K4E3">
    <property type="expression patterns" value="baseline and differential"/>
</dbReference>
<dbReference type="GO" id="GO:0005829">
    <property type="term" value="C:cytosol"/>
    <property type="evidence" value="ECO:0007005"/>
    <property type="project" value="TAIR"/>
</dbReference>
<dbReference type="GO" id="GO:1990726">
    <property type="term" value="C:Lsm1-7-Pat1 complex"/>
    <property type="evidence" value="ECO:0000303"/>
    <property type="project" value="ComplexPortal"/>
</dbReference>
<dbReference type="GO" id="GO:0120115">
    <property type="term" value="C:Lsm2-8 complex"/>
    <property type="evidence" value="ECO:0000315"/>
    <property type="project" value="ComplexPortal"/>
</dbReference>
<dbReference type="GO" id="GO:0005634">
    <property type="term" value="C:nucleus"/>
    <property type="evidence" value="ECO:0000314"/>
    <property type="project" value="ComplexPortal"/>
</dbReference>
<dbReference type="GO" id="GO:0000932">
    <property type="term" value="C:P-body"/>
    <property type="evidence" value="ECO:0000303"/>
    <property type="project" value="ComplexPortal"/>
</dbReference>
<dbReference type="GO" id="GO:0009536">
    <property type="term" value="C:plastid"/>
    <property type="evidence" value="ECO:0007005"/>
    <property type="project" value="TAIR"/>
</dbReference>
<dbReference type="GO" id="GO:0005681">
    <property type="term" value="C:spliceosomal complex"/>
    <property type="evidence" value="ECO:0007669"/>
    <property type="project" value="UniProtKB-KW"/>
</dbReference>
<dbReference type="GO" id="GO:0003723">
    <property type="term" value="F:RNA binding"/>
    <property type="evidence" value="ECO:0007669"/>
    <property type="project" value="UniProtKB-KW"/>
</dbReference>
<dbReference type="GO" id="GO:0000290">
    <property type="term" value="P:deadenylation-dependent decapping of nuclear-transcribed mRNA"/>
    <property type="evidence" value="ECO:0000269"/>
    <property type="project" value="ComplexPortal"/>
</dbReference>
<dbReference type="GO" id="GO:0000398">
    <property type="term" value="P:mRNA splicing, via spliceosome"/>
    <property type="evidence" value="ECO:0000315"/>
    <property type="project" value="ComplexPortal"/>
</dbReference>
<dbReference type="CDD" id="cd01723">
    <property type="entry name" value="LSm4"/>
    <property type="match status" value="1"/>
</dbReference>
<dbReference type="FunFam" id="2.30.30.100:FF:000005">
    <property type="entry name" value="U6 snRNA-associated Sm-like protein LSm4"/>
    <property type="match status" value="1"/>
</dbReference>
<dbReference type="Gene3D" id="2.30.30.100">
    <property type="match status" value="1"/>
</dbReference>
<dbReference type="InterPro" id="IPR034101">
    <property type="entry name" value="Lsm4"/>
</dbReference>
<dbReference type="InterPro" id="IPR027141">
    <property type="entry name" value="LSm4/Sm_D1/D3"/>
</dbReference>
<dbReference type="InterPro" id="IPR010920">
    <property type="entry name" value="LSM_dom_sf"/>
</dbReference>
<dbReference type="InterPro" id="IPR047575">
    <property type="entry name" value="Sm"/>
</dbReference>
<dbReference type="InterPro" id="IPR001163">
    <property type="entry name" value="Sm_dom_euk/arc"/>
</dbReference>
<dbReference type="PANTHER" id="PTHR23338">
    <property type="entry name" value="SMALL NUCLEAR RIBONUCLEOPROTEIN SM"/>
    <property type="match status" value="1"/>
</dbReference>
<dbReference type="Pfam" id="PF01423">
    <property type="entry name" value="LSM"/>
    <property type="match status" value="1"/>
</dbReference>
<dbReference type="SMART" id="SM00651">
    <property type="entry name" value="Sm"/>
    <property type="match status" value="1"/>
</dbReference>
<dbReference type="SUPFAM" id="SSF50182">
    <property type="entry name" value="Sm-like ribonucleoproteins"/>
    <property type="match status" value="1"/>
</dbReference>
<dbReference type="PROSITE" id="PS52002">
    <property type="entry name" value="SM"/>
    <property type="match status" value="1"/>
</dbReference>
<accession>F4K4E3</accession>
<accession>Q8LAC6</accession>
<accession>Q8RWJ9</accession>